<organism>
    <name type="scientific">Geobacter sp. (strain M21)</name>
    <dbReference type="NCBI Taxonomy" id="443144"/>
    <lineage>
        <taxon>Bacteria</taxon>
        <taxon>Pseudomonadati</taxon>
        <taxon>Thermodesulfobacteriota</taxon>
        <taxon>Desulfuromonadia</taxon>
        <taxon>Geobacterales</taxon>
        <taxon>Geobacteraceae</taxon>
        <taxon>Geobacter</taxon>
    </lineage>
</organism>
<keyword id="KW-0032">Aminotransferase</keyword>
<keyword id="KW-0663">Pyridoxal phosphate</keyword>
<keyword id="KW-0808">Transferase</keyword>
<proteinExistence type="inferred from homology"/>
<dbReference type="EC" id="2.6.1.83" evidence="1"/>
<dbReference type="EMBL" id="CP001661">
    <property type="protein sequence ID" value="ACT20157.1"/>
    <property type="molecule type" value="Genomic_DNA"/>
</dbReference>
<dbReference type="SMR" id="C6E9Q7"/>
<dbReference type="STRING" id="443144.GM21_4142"/>
<dbReference type="KEGG" id="gem:GM21_4142"/>
<dbReference type="eggNOG" id="COG0436">
    <property type="taxonomic scope" value="Bacteria"/>
</dbReference>
<dbReference type="HOGENOM" id="CLU_051433_0_0_7"/>
<dbReference type="OrthoDB" id="9804474at2"/>
<dbReference type="UniPathway" id="UPA00034">
    <property type="reaction ID" value="UER00466"/>
</dbReference>
<dbReference type="GO" id="GO:0010285">
    <property type="term" value="F:L,L-diaminopimelate aminotransferase activity"/>
    <property type="evidence" value="ECO:0007669"/>
    <property type="project" value="UniProtKB-EC"/>
</dbReference>
<dbReference type="GO" id="GO:0030170">
    <property type="term" value="F:pyridoxal phosphate binding"/>
    <property type="evidence" value="ECO:0007669"/>
    <property type="project" value="InterPro"/>
</dbReference>
<dbReference type="GO" id="GO:0009089">
    <property type="term" value="P:lysine biosynthetic process via diaminopimelate"/>
    <property type="evidence" value="ECO:0007669"/>
    <property type="project" value="UniProtKB-UniPathway"/>
</dbReference>
<dbReference type="CDD" id="cd00609">
    <property type="entry name" value="AAT_like"/>
    <property type="match status" value="1"/>
</dbReference>
<dbReference type="FunFam" id="3.40.640.10:FF:000099">
    <property type="entry name" value="LL-diaminopimelate aminotransferase, chloroplastic"/>
    <property type="match status" value="1"/>
</dbReference>
<dbReference type="Gene3D" id="3.90.1150.10">
    <property type="entry name" value="Aspartate Aminotransferase, domain 1"/>
    <property type="match status" value="1"/>
</dbReference>
<dbReference type="Gene3D" id="3.40.640.10">
    <property type="entry name" value="Type I PLP-dependent aspartate aminotransferase-like (Major domain)"/>
    <property type="match status" value="1"/>
</dbReference>
<dbReference type="HAMAP" id="MF_01642">
    <property type="entry name" value="DapL_aminotrans_1"/>
    <property type="match status" value="1"/>
</dbReference>
<dbReference type="InterPro" id="IPR004839">
    <property type="entry name" value="Aminotransferase_I/II_large"/>
</dbReference>
<dbReference type="InterPro" id="IPR019942">
    <property type="entry name" value="DapL/ALD1"/>
</dbReference>
<dbReference type="InterPro" id="IPR015424">
    <property type="entry name" value="PyrdxlP-dep_Trfase"/>
</dbReference>
<dbReference type="InterPro" id="IPR015421">
    <property type="entry name" value="PyrdxlP-dep_Trfase_major"/>
</dbReference>
<dbReference type="InterPro" id="IPR015422">
    <property type="entry name" value="PyrdxlP-dep_Trfase_small"/>
</dbReference>
<dbReference type="NCBIfam" id="TIGR03542">
    <property type="entry name" value="DAPAT_plant"/>
    <property type="match status" value="1"/>
</dbReference>
<dbReference type="PANTHER" id="PTHR43144">
    <property type="entry name" value="AMINOTRANSFERASE"/>
    <property type="match status" value="1"/>
</dbReference>
<dbReference type="Pfam" id="PF00155">
    <property type="entry name" value="Aminotran_1_2"/>
    <property type="match status" value="1"/>
</dbReference>
<dbReference type="SUPFAM" id="SSF53383">
    <property type="entry name" value="PLP-dependent transferases"/>
    <property type="match status" value="1"/>
</dbReference>
<comment type="function">
    <text evidence="1">Involved in the synthesis of meso-diaminopimelate (m-DAP or DL-DAP), required for both lysine and peptidoglycan biosynthesis. Catalyzes the direct conversion of tetrahydrodipicolinate to LL-diaminopimelate.</text>
</comment>
<comment type="catalytic activity">
    <reaction evidence="1">
        <text>(2S,6S)-2,6-diaminopimelate + 2-oxoglutarate = (S)-2,3,4,5-tetrahydrodipicolinate + L-glutamate + H2O + H(+)</text>
        <dbReference type="Rhea" id="RHEA:23988"/>
        <dbReference type="ChEBI" id="CHEBI:15377"/>
        <dbReference type="ChEBI" id="CHEBI:15378"/>
        <dbReference type="ChEBI" id="CHEBI:16810"/>
        <dbReference type="ChEBI" id="CHEBI:16845"/>
        <dbReference type="ChEBI" id="CHEBI:29985"/>
        <dbReference type="ChEBI" id="CHEBI:57609"/>
        <dbReference type="EC" id="2.6.1.83"/>
    </reaction>
</comment>
<comment type="cofactor">
    <cofactor evidence="1">
        <name>pyridoxal 5'-phosphate</name>
        <dbReference type="ChEBI" id="CHEBI:597326"/>
    </cofactor>
</comment>
<comment type="pathway">
    <text evidence="1">Amino-acid biosynthesis; L-lysine biosynthesis via DAP pathway; LL-2,6-diaminopimelate from (S)-tetrahydrodipicolinate (aminotransferase route): step 1/1.</text>
</comment>
<comment type="subunit">
    <text evidence="1">Homodimer.</text>
</comment>
<comment type="similarity">
    <text evidence="1">Belongs to the class-I pyridoxal-phosphate-dependent aminotransferase family. LL-diaminopimelate aminotransferase subfamily.</text>
</comment>
<accession>C6E9Q7</accession>
<evidence type="ECO:0000255" key="1">
    <source>
        <dbReference type="HAMAP-Rule" id="MF_01642"/>
    </source>
</evidence>
<gene>
    <name evidence="1" type="primary">dapL</name>
    <name type="ordered locus">GM21_4142</name>
</gene>
<feature type="chain" id="PRO_1000215832" description="LL-diaminopimelate aminotransferase">
    <location>
        <begin position="1"/>
        <end position="411"/>
    </location>
</feature>
<feature type="binding site" evidence="1">
    <location>
        <position position="15"/>
    </location>
    <ligand>
        <name>substrate</name>
    </ligand>
</feature>
<feature type="binding site" evidence="1">
    <location>
        <position position="42"/>
    </location>
    <ligand>
        <name>substrate</name>
    </ligand>
</feature>
<feature type="binding site" evidence="1">
    <location>
        <position position="72"/>
    </location>
    <ligand>
        <name>pyridoxal 5'-phosphate</name>
        <dbReference type="ChEBI" id="CHEBI:597326"/>
    </ligand>
</feature>
<feature type="binding site" evidence="1">
    <location>
        <begin position="108"/>
        <end position="109"/>
    </location>
    <ligand>
        <name>pyridoxal 5'-phosphate</name>
        <dbReference type="ChEBI" id="CHEBI:597326"/>
    </ligand>
</feature>
<feature type="binding site" evidence="1">
    <location>
        <position position="109"/>
    </location>
    <ligand>
        <name>substrate</name>
    </ligand>
</feature>
<feature type="binding site" evidence="1">
    <location>
        <position position="132"/>
    </location>
    <ligand>
        <name>pyridoxal 5'-phosphate</name>
        <dbReference type="ChEBI" id="CHEBI:597326"/>
    </ligand>
</feature>
<feature type="binding site" evidence="1">
    <location>
        <position position="132"/>
    </location>
    <ligand>
        <name>substrate</name>
    </ligand>
</feature>
<feature type="binding site" evidence="1">
    <location>
        <position position="187"/>
    </location>
    <ligand>
        <name>pyridoxal 5'-phosphate</name>
        <dbReference type="ChEBI" id="CHEBI:597326"/>
    </ligand>
</feature>
<feature type="binding site" evidence="1">
    <location>
        <position position="187"/>
    </location>
    <ligand>
        <name>substrate</name>
    </ligand>
</feature>
<feature type="binding site" evidence="1">
    <location>
        <position position="218"/>
    </location>
    <ligand>
        <name>pyridoxal 5'-phosphate</name>
        <dbReference type="ChEBI" id="CHEBI:597326"/>
    </ligand>
</feature>
<feature type="binding site" evidence="1">
    <location>
        <begin position="246"/>
        <end position="248"/>
    </location>
    <ligand>
        <name>pyridoxal 5'-phosphate</name>
        <dbReference type="ChEBI" id="CHEBI:597326"/>
    </ligand>
</feature>
<feature type="binding site" evidence="1">
    <location>
        <position position="257"/>
    </location>
    <ligand>
        <name>pyridoxal 5'-phosphate</name>
        <dbReference type="ChEBI" id="CHEBI:597326"/>
    </ligand>
</feature>
<feature type="binding site" evidence="1">
    <location>
        <position position="292"/>
    </location>
    <ligand>
        <name>pyridoxal 5'-phosphate</name>
        <dbReference type="ChEBI" id="CHEBI:597326"/>
    </ligand>
</feature>
<feature type="binding site" evidence="1">
    <location>
        <position position="292"/>
    </location>
    <ligand>
        <name>substrate</name>
    </ligand>
</feature>
<feature type="binding site" evidence="1">
    <location>
        <position position="388"/>
    </location>
    <ligand>
        <name>substrate</name>
    </ligand>
</feature>
<feature type="modified residue" description="N6-(pyridoxal phosphate)lysine" evidence="1">
    <location>
        <position position="249"/>
    </location>
</feature>
<reference key="1">
    <citation type="submission" date="2009-07" db="EMBL/GenBank/DDBJ databases">
        <title>Complete sequence of Geobacter sp. M21.</title>
        <authorList>
            <consortium name="US DOE Joint Genome Institute"/>
            <person name="Lucas S."/>
            <person name="Copeland A."/>
            <person name="Lapidus A."/>
            <person name="Glavina del Rio T."/>
            <person name="Dalin E."/>
            <person name="Tice H."/>
            <person name="Bruce D."/>
            <person name="Goodwin L."/>
            <person name="Pitluck S."/>
            <person name="Saunders E."/>
            <person name="Brettin T."/>
            <person name="Detter J.C."/>
            <person name="Han C."/>
            <person name="Larimer F."/>
            <person name="Land M."/>
            <person name="Hauser L."/>
            <person name="Kyrpides N."/>
            <person name="Ovchinnikova G."/>
            <person name="Lovley D."/>
        </authorList>
    </citation>
    <scope>NUCLEOTIDE SEQUENCE [LARGE SCALE GENOMIC DNA]</scope>
    <source>
        <strain>M21</strain>
    </source>
</reference>
<name>DAPAT_GEOSM</name>
<protein>
    <recommendedName>
        <fullName evidence="1">LL-diaminopimelate aminotransferase</fullName>
        <shortName evidence="1">DAP-AT</shortName>
        <shortName evidence="1">DAP-aminotransferase</shortName>
        <shortName evidence="1">LL-DAP-aminotransferase</shortName>
        <ecNumber evidence="1">2.6.1.83</ecNumber>
    </recommendedName>
</protein>
<sequence length="411" mass="45340">MAKINDNYLKLKAGYLFPEIGRRVRAFAAANPEAKVIRLGIGDVTQPLTPTILKAFHEAVDDLASENSFMGYGPEQGYDFLIDAIVEKSYKPLGVDLKTTEMFISDGSKCDCANILDIFALDNTVAIGDPVYPVYNDTNVMIGRTGDADDKGYYKGLVYMPCTEENGFFPAYPKEKVDMIYLCFPNNPTGAVATKEQLKGWVDYALANDSIILFDAAYEAFITDPSIPHSIYQVEGAKKCAIEFRSFSKTAGFTGVRCGLVVVPEELEGTTSNGEKYSFNKLWLRRQTTKFNGASYPVQKAAAAVYTEQGWKETQANIDYYMENARIIREGLASAGLTVYGGVNAPYIWLKTPAGLTSWDFFDKLLNDCHVVGTPGSGFGPSGEGYFRLSAFGNRDNVVEAVERIKKNLKK</sequence>